<name>DXS_CALS4</name>
<reference key="1">
    <citation type="journal article" date="2002" name="Genome Res.">
        <title>A complete sequence of the T. tengcongensis genome.</title>
        <authorList>
            <person name="Bao Q."/>
            <person name="Tian Y."/>
            <person name="Li W."/>
            <person name="Xu Z."/>
            <person name="Xuan Z."/>
            <person name="Hu S."/>
            <person name="Dong W."/>
            <person name="Yang J."/>
            <person name="Chen Y."/>
            <person name="Xue Y."/>
            <person name="Xu Y."/>
            <person name="Lai X."/>
            <person name="Huang L."/>
            <person name="Dong X."/>
            <person name="Ma Y."/>
            <person name="Ling L."/>
            <person name="Tan H."/>
            <person name="Chen R."/>
            <person name="Wang J."/>
            <person name="Yu J."/>
            <person name="Yang H."/>
        </authorList>
    </citation>
    <scope>NUCLEOTIDE SEQUENCE [LARGE SCALE GENOMIC DNA]</scope>
    <source>
        <strain>DSM 15242 / JCM 11007 / NBRC 100824 / MB4</strain>
    </source>
</reference>
<organism>
    <name type="scientific">Caldanaerobacter subterraneus subsp. tengcongensis (strain DSM 15242 / JCM 11007 / NBRC 100824 / MB4)</name>
    <name type="common">Thermoanaerobacter tengcongensis</name>
    <dbReference type="NCBI Taxonomy" id="273068"/>
    <lineage>
        <taxon>Bacteria</taxon>
        <taxon>Bacillati</taxon>
        <taxon>Bacillota</taxon>
        <taxon>Clostridia</taxon>
        <taxon>Thermoanaerobacterales</taxon>
        <taxon>Thermoanaerobacteraceae</taxon>
        <taxon>Caldanaerobacter</taxon>
    </lineage>
</organism>
<dbReference type="EC" id="2.2.1.7" evidence="1"/>
<dbReference type="EMBL" id="AE008691">
    <property type="protein sequence ID" value="AAM24522.1"/>
    <property type="molecule type" value="Genomic_DNA"/>
</dbReference>
<dbReference type="RefSeq" id="WP_011025612.1">
    <property type="nucleotide sequence ID" value="NC_003869.1"/>
</dbReference>
<dbReference type="SMR" id="Q8RAC5"/>
<dbReference type="STRING" id="273068.TTE1298"/>
<dbReference type="KEGG" id="tte:TTE1298"/>
<dbReference type="eggNOG" id="COG1154">
    <property type="taxonomic scope" value="Bacteria"/>
</dbReference>
<dbReference type="HOGENOM" id="CLU_009227_1_4_9"/>
<dbReference type="OrthoDB" id="9803371at2"/>
<dbReference type="UniPathway" id="UPA00064">
    <property type="reaction ID" value="UER00091"/>
</dbReference>
<dbReference type="Proteomes" id="UP000000555">
    <property type="component" value="Chromosome"/>
</dbReference>
<dbReference type="GO" id="GO:0005829">
    <property type="term" value="C:cytosol"/>
    <property type="evidence" value="ECO:0007669"/>
    <property type="project" value="TreeGrafter"/>
</dbReference>
<dbReference type="GO" id="GO:0008661">
    <property type="term" value="F:1-deoxy-D-xylulose-5-phosphate synthase activity"/>
    <property type="evidence" value="ECO:0007669"/>
    <property type="project" value="UniProtKB-UniRule"/>
</dbReference>
<dbReference type="GO" id="GO:0000287">
    <property type="term" value="F:magnesium ion binding"/>
    <property type="evidence" value="ECO:0007669"/>
    <property type="project" value="UniProtKB-UniRule"/>
</dbReference>
<dbReference type="GO" id="GO:0030976">
    <property type="term" value="F:thiamine pyrophosphate binding"/>
    <property type="evidence" value="ECO:0007669"/>
    <property type="project" value="UniProtKB-UniRule"/>
</dbReference>
<dbReference type="GO" id="GO:0052865">
    <property type="term" value="P:1-deoxy-D-xylulose 5-phosphate biosynthetic process"/>
    <property type="evidence" value="ECO:0007669"/>
    <property type="project" value="UniProtKB-UniPathway"/>
</dbReference>
<dbReference type="GO" id="GO:0019288">
    <property type="term" value="P:isopentenyl diphosphate biosynthetic process, methylerythritol 4-phosphate pathway"/>
    <property type="evidence" value="ECO:0007669"/>
    <property type="project" value="TreeGrafter"/>
</dbReference>
<dbReference type="GO" id="GO:0016114">
    <property type="term" value="P:terpenoid biosynthetic process"/>
    <property type="evidence" value="ECO:0007669"/>
    <property type="project" value="UniProtKB-UniRule"/>
</dbReference>
<dbReference type="GO" id="GO:0009228">
    <property type="term" value="P:thiamine biosynthetic process"/>
    <property type="evidence" value="ECO:0007669"/>
    <property type="project" value="UniProtKB-UniRule"/>
</dbReference>
<dbReference type="CDD" id="cd02007">
    <property type="entry name" value="TPP_DXS"/>
    <property type="match status" value="1"/>
</dbReference>
<dbReference type="CDD" id="cd07033">
    <property type="entry name" value="TPP_PYR_DXS_TK_like"/>
    <property type="match status" value="1"/>
</dbReference>
<dbReference type="FunFam" id="3.40.50.920:FF:000002">
    <property type="entry name" value="1-deoxy-D-xylulose-5-phosphate synthase"/>
    <property type="match status" value="1"/>
</dbReference>
<dbReference type="FunFam" id="3.40.50.970:FF:000005">
    <property type="entry name" value="1-deoxy-D-xylulose-5-phosphate synthase"/>
    <property type="match status" value="1"/>
</dbReference>
<dbReference type="Gene3D" id="3.40.50.920">
    <property type="match status" value="1"/>
</dbReference>
<dbReference type="Gene3D" id="3.40.50.970">
    <property type="match status" value="2"/>
</dbReference>
<dbReference type="HAMAP" id="MF_00315">
    <property type="entry name" value="DXP_synth"/>
    <property type="match status" value="1"/>
</dbReference>
<dbReference type="InterPro" id="IPR005477">
    <property type="entry name" value="Dxylulose-5-P_synthase"/>
</dbReference>
<dbReference type="InterPro" id="IPR029061">
    <property type="entry name" value="THDP-binding"/>
</dbReference>
<dbReference type="InterPro" id="IPR009014">
    <property type="entry name" value="Transketo_C/PFOR_II"/>
</dbReference>
<dbReference type="InterPro" id="IPR005475">
    <property type="entry name" value="Transketolase-like_Pyr-bd"/>
</dbReference>
<dbReference type="InterPro" id="IPR020826">
    <property type="entry name" value="Transketolase_BS"/>
</dbReference>
<dbReference type="InterPro" id="IPR033248">
    <property type="entry name" value="Transketolase_C"/>
</dbReference>
<dbReference type="InterPro" id="IPR049557">
    <property type="entry name" value="Transketolase_CS"/>
</dbReference>
<dbReference type="NCBIfam" id="TIGR00204">
    <property type="entry name" value="dxs"/>
    <property type="match status" value="1"/>
</dbReference>
<dbReference type="NCBIfam" id="NF003933">
    <property type="entry name" value="PRK05444.2-2"/>
    <property type="match status" value="1"/>
</dbReference>
<dbReference type="PANTHER" id="PTHR43322">
    <property type="entry name" value="1-D-DEOXYXYLULOSE 5-PHOSPHATE SYNTHASE-RELATED"/>
    <property type="match status" value="1"/>
</dbReference>
<dbReference type="PANTHER" id="PTHR43322:SF5">
    <property type="entry name" value="1-DEOXY-D-XYLULOSE-5-PHOSPHATE SYNTHASE, CHLOROPLASTIC"/>
    <property type="match status" value="1"/>
</dbReference>
<dbReference type="Pfam" id="PF13292">
    <property type="entry name" value="DXP_synthase_N"/>
    <property type="match status" value="1"/>
</dbReference>
<dbReference type="Pfam" id="PF02779">
    <property type="entry name" value="Transket_pyr"/>
    <property type="match status" value="1"/>
</dbReference>
<dbReference type="Pfam" id="PF02780">
    <property type="entry name" value="Transketolase_C"/>
    <property type="match status" value="1"/>
</dbReference>
<dbReference type="SMART" id="SM00861">
    <property type="entry name" value="Transket_pyr"/>
    <property type="match status" value="1"/>
</dbReference>
<dbReference type="SUPFAM" id="SSF52518">
    <property type="entry name" value="Thiamin diphosphate-binding fold (THDP-binding)"/>
    <property type="match status" value="2"/>
</dbReference>
<dbReference type="SUPFAM" id="SSF52922">
    <property type="entry name" value="TK C-terminal domain-like"/>
    <property type="match status" value="1"/>
</dbReference>
<dbReference type="PROSITE" id="PS00801">
    <property type="entry name" value="TRANSKETOLASE_1"/>
    <property type="match status" value="1"/>
</dbReference>
<dbReference type="PROSITE" id="PS00802">
    <property type="entry name" value="TRANSKETOLASE_2"/>
    <property type="match status" value="1"/>
</dbReference>
<feature type="chain" id="PRO_0000189165" description="1-deoxy-D-xylulose-5-phosphate synthase">
    <location>
        <begin position="1"/>
        <end position="622"/>
    </location>
</feature>
<feature type="binding site" evidence="1">
    <location>
        <position position="71"/>
    </location>
    <ligand>
        <name>thiamine diphosphate</name>
        <dbReference type="ChEBI" id="CHEBI:58937"/>
    </ligand>
</feature>
<feature type="binding site" evidence="1">
    <location>
        <begin position="112"/>
        <end position="114"/>
    </location>
    <ligand>
        <name>thiamine diphosphate</name>
        <dbReference type="ChEBI" id="CHEBI:58937"/>
    </ligand>
</feature>
<feature type="binding site" evidence="1">
    <location>
        <position position="143"/>
    </location>
    <ligand>
        <name>Mg(2+)</name>
        <dbReference type="ChEBI" id="CHEBI:18420"/>
    </ligand>
</feature>
<feature type="binding site" evidence="1">
    <location>
        <begin position="144"/>
        <end position="145"/>
    </location>
    <ligand>
        <name>thiamine diphosphate</name>
        <dbReference type="ChEBI" id="CHEBI:58937"/>
    </ligand>
</feature>
<feature type="binding site" evidence="1">
    <location>
        <position position="172"/>
    </location>
    <ligand>
        <name>Mg(2+)</name>
        <dbReference type="ChEBI" id="CHEBI:18420"/>
    </ligand>
</feature>
<feature type="binding site" evidence="1">
    <location>
        <position position="172"/>
    </location>
    <ligand>
        <name>thiamine diphosphate</name>
        <dbReference type="ChEBI" id="CHEBI:58937"/>
    </ligand>
</feature>
<feature type="binding site" evidence="1">
    <location>
        <position position="283"/>
    </location>
    <ligand>
        <name>thiamine diphosphate</name>
        <dbReference type="ChEBI" id="CHEBI:58937"/>
    </ligand>
</feature>
<feature type="binding site" evidence="1">
    <location>
        <position position="363"/>
    </location>
    <ligand>
        <name>thiamine diphosphate</name>
        <dbReference type="ChEBI" id="CHEBI:58937"/>
    </ligand>
</feature>
<comment type="function">
    <text evidence="1">Catalyzes the acyloin condensation reaction between C atoms 2 and 3 of pyruvate and glyceraldehyde 3-phosphate to yield 1-deoxy-D-xylulose-5-phosphate (DXP).</text>
</comment>
<comment type="catalytic activity">
    <reaction evidence="1">
        <text>D-glyceraldehyde 3-phosphate + pyruvate + H(+) = 1-deoxy-D-xylulose 5-phosphate + CO2</text>
        <dbReference type="Rhea" id="RHEA:12605"/>
        <dbReference type="ChEBI" id="CHEBI:15361"/>
        <dbReference type="ChEBI" id="CHEBI:15378"/>
        <dbReference type="ChEBI" id="CHEBI:16526"/>
        <dbReference type="ChEBI" id="CHEBI:57792"/>
        <dbReference type="ChEBI" id="CHEBI:59776"/>
        <dbReference type="EC" id="2.2.1.7"/>
    </reaction>
</comment>
<comment type="cofactor">
    <cofactor evidence="1">
        <name>Mg(2+)</name>
        <dbReference type="ChEBI" id="CHEBI:18420"/>
    </cofactor>
    <text evidence="1">Binds 1 Mg(2+) ion per subunit.</text>
</comment>
<comment type="cofactor">
    <cofactor evidence="1">
        <name>thiamine diphosphate</name>
        <dbReference type="ChEBI" id="CHEBI:58937"/>
    </cofactor>
    <text evidence="1">Binds 1 thiamine pyrophosphate per subunit.</text>
</comment>
<comment type="pathway">
    <text evidence="1">Metabolic intermediate biosynthesis; 1-deoxy-D-xylulose 5-phosphate biosynthesis; 1-deoxy-D-xylulose 5-phosphate from D-glyceraldehyde 3-phosphate and pyruvate: step 1/1.</text>
</comment>
<comment type="subunit">
    <text evidence="1">Homodimer.</text>
</comment>
<comment type="similarity">
    <text evidence="1">Belongs to the transketolase family. DXPS subfamily.</text>
</comment>
<gene>
    <name evidence="1" type="primary">dxs</name>
    <name type="ordered locus">TTE1298</name>
</gene>
<accession>Q8RAC5</accession>
<proteinExistence type="inferred from homology"/>
<evidence type="ECO:0000255" key="1">
    <source>
        <dbReference type="HAMAP-Rule" id="MF_00315"/>
    </source>
</evidence>
<sequence length="622" mass="68975">MLEQINSPYDLKKLDIKDLPRLSEEIRQFIVEKVSKTGGHLASNLGIVELTLALHYVFNSPVDKIIWDVGHQCYVHKMITGRRDKFDTLRQFNGLSGYTKRTESIHDIFGAGHSSTSLSAALGIATARDLKGEKYHVIAVIGDGALTGGMALEALNNIGRSRKDVIVILNHNEMSISENVGSLSLYLSKLRTDPTYNKVKQEIDNLLNIIPPIGKSLHKYIEKIKDSIKQLVVPGMFFEELGFTYLGPIDGHNVEELIEVLERSKKMKGPLLIHVVTKKGKGYMFAEKRPDKFHSAAPFDIETGKFVGEGKDSYSDVFGKTLAEMALKDEKIVAITAAMPEGTGLIHFAKLIPDRFFDVGIAEQHATTFAAGLAVEGYKPYFAVYSTFLQRAYDQVIHDVCIQKLPVVFAVDRAGIVGEDGETHQGVFDISFLRAIPNIAIMSPKDANELVEMVKLSRNLDFPVAIRYPRGKAGEYDISRKPSFPLGKGEVLLEGEKIAVFALGRMVSKSIDAAEILKGHGINPFVVNLRFVKPLDEELILEISNKVDLVVTVEDNVIAGGVGSAILELLNDKKVYRPVLRLGFPDKFIEHGDVESLFKKYGLDSQSIADTILQRYKEMRGS</sequence>
<keyword id="KW-0414">Isoprene biosynthesis</keyword>
<keyword id="KW-0460">Magnesium</keyword>
<keyword id="KW-0479">Metal-binding</keyword>
<keyword id="KW-1185">Reference proteome</keyword>
<keyword id="KW-0784">Thiamine biosynthesis</keyword>
<keyword id="KW-0786">Thiamine pyrophosphate</keyword>
<keyword id="KW-0808">Transferase</keyword>
<protein>
    <recommendedName>
        <fullName evidence="1">1-deoxy-D-xylulose-5-phosphate synthase</fullName>
        <ecNumber evidence="1">2.2.1.7</ecNumber>
    </recommendedName>
    <alternativeName>
        <fullName evidence="1">1-deoxyxylulose-5-phosphate synthase</fullName>
        <shortName evidence="1">DXP synthase</shortName>
        <shortName evidence="1">DXPS</shortName>
    </alternativeName>
</protein>